<name>PSAA_AETGR</name>
<proteinExistence type="inferred from homology"/>
<accession>A4QJJ9</accession>
<dbReference type="EC" id="1.97.1.12" evidence="1"/>
<dbReference type="EMBL" id="AP009367">
    <property type="protein sequence ID" value="BAF49854.1"/>
    <property type="molecule type" value="Genomic_DNA"/>
</dbReference>
<dbReference type="RefSeq" id="YP_001123030.1">
    <property type="nucleotide sequence ID" value="NC_009266.1"/>
</dbReference>
<dbReference type="SMR" id="A4QJJ9"/>
<dbReference type="GeneID" id="4962307"/>
<dbReference type="GO" id="GO:0009535">
    <property type="term" value="C:chloroplast thylakoid membrane"/>
    <property type="evidence" value="ECO:0007669"/>
    <property type="project" value="UniProtKB-SubCell"/>
</dbReference>
<dbReference type="GO" id="GO:0009522">
    <property type="term" value="C:photosystem I"/>
    <property type="evidence" value="ECO:0007669"/>
    <property type="project" value="UniProtKB-KW"/>
</dbReference>
<dbReference type="GO" id="GO:0051539">
    <property type="term" value="F:4 iron, 4 sulfur cluster binding"/>
    <property type="evidence" value="ECO:0007669"/>
    <property type="project" value="UniProtKB-KW"/>
</dbReference>
<dbReference type="GO" id="GO:0016168">
    <property type="term" value="F:chlorophyll binding"/>
    <property type="evidence" value="ECO:0007669"/>
    <property type="project" value="UniProtKB-KW"/>
</dbReference>
<dbReference type="GO" id="GO:0009055">
    <property type="term" value="F:electron transfer activity"/>
    <property type="evidence" value="ECO:0007669"/>
    <property type="project" value="UniProtKB-UniRule"/>
</dbReference>
<dbReference type="GO" id="GO:0000287">
    <property type="term" value="F:magnesium ion binding"/>
    <property type="evidence" value="ECO:0007669"/>
    <property type="project" value="UniProtKB-UniRule"/>
</dbReference>
<dbReference type="GO" id="GO:0016491">
    <property type="term" value="F:oxidoreductase activity"/>
    <property type="evidence" value="ECO:0007669"/>
    <property type="project" value="UniProtKB-KW"/>
</dbReference>
<dbReference type="GO" id="GO:0015979">
    <property type="term" value="P:photosynthesis"/>
    <property type="evidence" value="ECO:0007669"/>
    <property type="project" value="UniProtKB-UniRule"/>
</dbReference>
<dbReference type="FunFam" id="1.20.1130.10:FF:000001">
    <property type="entry name" value="Photosystem I P700 chlorophyll a apoprotein A2"/>
    <property type="match status" value="1"/>
</dbReference>
<dbReference type="Gene3D" id="1.20.1130.10">
    <property type="entry name" value="Photosystem I PsaA/PsaB"/>
    <property type="match status" value="1"/>
</dbReference>
<dbReference type="HAMAP" id="MF_00458">
    <property type="entry name" value="PSI_PsaA"/>
    <property type="match status" value="1"/>
</dbReference>
<dbReference type="InterPro" id="IPR006243">
    <property type="entry name" value="PSI_PsaA"/>
</dbReference>
<dbReference type="InterPro" id="IPR001280">
    <property type="entry name" value="PSI_PsaA/B"/>
</dbReference>
<dbReference type="InterPro" id="IPR020586">
    <property type="entry name" value="PSI_PsaA/B_CS"/>
</dbReference>
<dbReference type="InterPro" id="IPR036408">
    <property type="entry name" value="PSI_PsaA/B_sf"/>
</dbReference>
<dbReference type="NCBIfam" id="TIGR01335">
    <property type="entry name" value="psaA"/>
    <property type="match status" value="1"/>
</dbReference>
<dbReference type="PANTHER" id="PTHR30128">
    <property type="entry name" value="OUTER MEMBRANE PROTEIN, OMPA-RELATED"/>
    <property type="match status" value="1"/>
</dbReference>
<dbReference type="PANTHER" id="PTHR30128:SF19">
    <property type="entry name" value="PHOTOSYSTEM I P700 CHLOROPHYLL A APOPROTEIN A1-RELATED"/>
    <property type="match status" value="1"/>
</dbReference>
<dbReference type="Pfam" id="PF00223">
    <property type="entry name" value="PsaA_PsaB"/>
    <property type="match status" value="1"/>
</dbReference>
<dbReference type="PIRSF" id="PIRSF002905">
    <property type="entry name" value="PSI_A"/>
    <property type="match status" value="1"/>
</dbReference>
<dbReference type="PRINTS" id="PR00257">
    <property type="entry name" value="PHOTSYSPSAAB"/>
</dbReference>
<dbReference type="SUPFAM" id="SSF81558">
    <property type="entry name" value="Photosystem I subunits PsaA/PsaB"/>
    <property type="match status" value="1"/>
</dbReference>
<dbReference type="PROSITE" id="PS00419">
    <property type="entry name" value="PHOTOSYSTEM_I_PSAAB"/>
    <property type="match status" value="1"/>
</dbReference>
<reference key="1">
    <citation type="submission" date="2007-03" db="EMBL/GenBank/DDBJ databases">
        <title>Sequencing analysis of Aethionema grandiflorum chloroplast DNA.</title>
        <authorList>
            <person name="Hosouchi T."/>
            <person name="Tsuruoka H."/>
            <person name="Kotani H."/>
        </authorList>
    </citation>
    <scope>NUCLEOTIDE SEQUENCE [LARGE SCALE GENOMIC DNA]</scope>
</reference>
<feature type="chain" id="PRO_0000294215" description="Photosystem I P700 chlorophyll a apoprotein A1">
    <location>
        <begin position="1"/>
        <end position="750"/>
    </location>
</feature>
<feature type="transmembrane region" description="Helical; Name=I" evidence="1">
    <location>
        <begin position="70"/>
        <end position="93"/>
    </location>
</feature>
<feature type="transmembrane region" description="Helical; Name=II" evidence="1">
    <location>
        <begin position="156"/>
        <end position="179"/>
    </location>
</feature>
<feature type="transmembrane region" description="Helical; Name=III" evidence="1">
    <location>
        <begin position="195"/>
        <end position="219"/>
    </location>
</feature>
<feature type="transmembrane region" description="Helical; Name=IV" evidence="1">
    <location>
        <begin position="291"/>
        <end position="309"/>
    </location>
</feature>
<feature type="transmembrane region" description="Helical; Name=V" evidence="1">
    <location>
        <begin position="346"/>
        <end position="369"/>
    </location>
</feature>
<feature type="transmembrane region" description="Helical; Name=VI" evidence="1">
    <location>
        <begin position="385"/>
        <end position="411"/>
    </location>
</feature>
<feature type="transmembrane region" description="Helical; Name=VII" evidence="1">
    <location>
        <begin position="433"/>
        <end position="455"/>
    </location>
</feature>
<feature type="transmembrane region" description="Helical; Name=VIII" evidence="1">
    <location>
        <begin position="531"/>
        <end position="549"/>
    </location>
</feature>
<feature type="transmembrane region" description="Helical; Name=IX" evidence="1">
    <location>
        <begin position="589"/>
        <end position="610"/>
    </location>
</feature>
<feature type="transmembrane region" description="Helical; Name=X" evidence="1">
    <location>
        <begin position="664"/>
        <end position="686"/>
    </location>
</feature>
<feature type="transmembrane region" description="Helical; Name=XI" evidence="1">
    <location>
        <begin position="724"/>
        <end position="744"/>
    </location>
</feature>
<feature type="binding site" evidence="1">
    <location>
        <position position="573"/>
    </location>
    <ligand>
        <name>[4Fe-4S] cluster</name>
        <dbReference type="ChEBI" id="CHEBI:49883"/>
        <note>ligand shared between dimeric partners</note>
    </ligand>
</feature>
<feature type="binding site" evidence="1">
    <location>
        <position position="582"/>
    </location>
    <ligand>
        <name>[4Fe-4S] cluster</name>
        <dbReference type="ChEBI" id="CHEBI:49883"/>
        <note>ligand shared between dimeric partners</note>
    </ligand>
</feature>
<feature type="binding site" description="axial binding residue" evidence="1">
    <location>
        <position position="675"/>
    </location>
    <ligand>
        <name>chlorophyll a'</name>
        <dbReference type="ChEBI" id="CHEBI:189419"/>
        <label>A1</label>
    </ligand>
    <ligandPart>
        <name>Mg</name>
        <dbReference type="ChEBI" id="CHEBI:25107"/>
    </ligandPart>
</feature>
<feature type="binding site" description="axial binding residue" evidence="1">
    <location>
        <position position="683"/>
    </location>
    <ligand>
        <name>chlorophyll a</name>
        <dbReference type="ChEBI" id="CHEBI:58416"/>
        <label>A3</label>
    </ligand>
    <ligandPart>
        <name>Mg</name>
        <dbReference type="ChEBI" id="CHEBI:25107"/>
    </ligandPart>
</feature>
<feature type="binding site" evidence="1">
    <location>
        <position position="691"/>
    </location>
    <ligand>
        <name>chlorophyll a</name>
        <dbReference type="ChEBI" id="CHEBI:58416"/>
        <label>A3</label>
    </ligand>
</feature>
<feature type="binding site" evidence="1">
    <location>
        <position position="692"/>
    </location>
    <ligand>
        <name>phylloquinone</name>
        <dbReference type="ChEBI" id="CHEBI:18067"/>
        <label>A</label>
    </ligand>
</feature>
<geneLocation type="chloroplast"/>
<gene>
    <name evidence="1" type="primary">psaA</name>
</gene>
<evidence type="ECO:0000255" key="1">
    <source>
        <dbReference type="HAMAP-Rule" id="MF_00458"/>
    </source>
</evidence>
<comment type="function">
    <text>PsaA and PsaB bind P700, the primary electron donor of photosystem I (PSI), as well as the electron acceptors A0, A1 and FX. PSI is a plastocyanin-ferredoxin oxidoreductase, converting photonic excitation into a charge separation, which transfers an electron from the donor P700 chlorophyll pair to the spectroscopically characterized acceptors A0, A1, FX, FA and FB in turn. Oxidized P700 is reduced on the lumenal side of the thylakoid membrane by plastocyanin.</text>
</comment>
<comment type="catalytic activity">
    <reaction evidence="1">
        <text>reduced [plastocyanin] + hnu + oxidized [2Fe-2S]-[ferredoxin] = oxidized [plastocyanin] + reduced [2Fe-2S]-[ferredoxin]</text>
        <dbReference type="Rhea" id="RHEA:30407"/>
        <dbReference type="Rhea" id="RHEA-COMP:10000"/>
        <dbReference type="Rhea" id="RHEA-COMP:10001"/>
        <dbReference type="Rhea" id="RHEA-COMP:10039"/>
        <dbReference type="Rhea" id="RHEA-COMP:10040"/>
        <dbReference type="ChEBI" id="CHEBI:29036"/>
        <dbReference type="ChEBI" id="CHEBI:30212"/>
        <dbReference type="ChEBI" id="CHEBI:33737"/>
        <dbReference type="ChEBI" id="CHEBI:33738"/>
        <dbReference type="ChEBI" id="CHEBI:49552"/>
        <dbReference type="EC" id="1.97.1.12"/>
    </reaction>
</comment>
<comment type="cofactor">
    <text evidence="1">P700 is a chlorophyll a/chlorophyll a' dimer, A0 is one or more chlorophyll a, A1 is one or both phylloquinones and FX is a shared 4Fe-4S iron-sulfur center.</text>
</comment>
<comment type="subunit">
    <text evidence="1">The PsaA/B heterodimer binds the P700 chlorophyll special pair and subsequent electron acceptors. PSI consists of a core antenna complex that captures photons, and an electron transfer chain that converts photonic excitation into a charge separation. The eukaryotic PSI reaction center is composed of at least 11 subunits.</text>
</comment>
<comment type="subcellular location">
    <subcellularLocation>
        <location evidence="1">Plastid</location>
        <location evidence="1">Chloroplast thylakoid membrane</location>
        <topology evidence="1">Multi-pass membrane protein</topology>
    </subcellularLocation>
</comment>
<comment type="similarity">
    <text evidence="1">Belongs to the PsaA/PsaB family.</text>
</comment>
<keyword id="KW-0004">4Fe-4S</keyword>
<keyword id="KW-0148">Chlorophyll</keyword>
<keyword id="KW-0150">Chloroplast</keyword>
<keyword id="KW-0157">Chromophore</keyword>
<keyword id="KW-0249">Electron transport</keyword>
<keyword id="KW-0408">Iron</keyword>
<keyword id="KW-0411">Iron-sulfur</keyword>
<keyword id="KW-0460">Magnesium</keyword>
<keyword id="KW-0472">Membrane</keyword>
<keyword id="KW-0479">Metal-binding</keyword>
<keyword id="KW-0560">Oxidoreductase</keyword>
<keyword id="KW-0602">Photosynthesis</keyword>
<keyword id="KW-0603">Photosystem I</keyword>
<keyword id="KW-0934">Plastid</keyword>
<keyword id="KW-0793">Thylakoid</keyword>
<keyword id="KW-0812">Transmembrane</keyword>
<keyword id="KW-1133">Transmembrane helix</keyword>
<keyword id="KW-0813">Transport</keyword>
<protein>
    <recommendedName>
        <fullName evidence="1">Photosystem I P700 chlorophyll a apoprotein A1</fullName>
        <ecNumber evidence="1">1.97.1.12</ecNumber>
    </recommendedName>
    <alternativeName>
        <fullName evidence="1">PSI-A</fullName>
    </alternativeName>
    <alternativeName>
        <fullName evidence="1">PsaA</fullName>
    </alternativeName>
</protein>
<organism>
    <name type="scientific">Aethionema grandiflorum</name>
    <name type="common">Persian stone-cress</name>
    <dbReference type="NCBI Taxonomy" id="72657"/>
    <lineage>
        <taxon>Eukaryota</taxon>
        <taxon>Viridiplantae</taxon>
        <taxon>Streptophyta</taxon>
        <taxon>Embryophyta</taxon>
        <taxon>Tracheophyta</taxon>
        <taxon>Spermatophyta</taxon>
        <taxon>Magnoliopsida</taxon>
        <taxon>eudicotyledons</taxon>
        <taxon>Gunneridae</taxon>
        <taxon>Pentapetalae</taxon>
        <taxon>rosids</taxon>
        <taxon>malvids</taxon>
        <taxon>Brassicales</taxon>
        <taxon>Brassicaceae</taxon>
        <taxon>Aethionemeae</taxon>
        <taxon>Aethionema</taxon>
    </lineage>
</organism>
<sequence>MIIRSPEPEVKILVDRDPIKTSFEEWAKPGHFSRTIAKGPDTTTWIWNLHADAHDFDSHTSDLEEISRKVFSAHFGQLSIIFLWLSGMYFHGARFSNYEAWLSDPTHIGPSAQVVWPIVGQEILNGDVGGGFRGIQITSGFFQIWRASGITSELQLYCTAIGALVFAALMLFAGWFHYHKAAPKLAWFQDVESMLNHHLAGLLGLGSLSWAGHQVHVSLPINQFLNAGVDPKEIPLPHEFILNRDLLAQLYPSFAEGATPFFTLNWSKYSEFLTFRGGLDPVTGGLWLTDIAHHHLAIAILFLIAGHMYRTNWGIGHGLKDILEAHKGPFTGQGHKGLYEILTTSWHAQLSLNLAMLGSLTIVVAHHMYSMPPYPYLATDYATQLSLFTHHMWIGGFLIVGAAAHAAIFMVRDYDPTNRYNDLLDRVLRHRDAIISHLNWACIFLGFHSFGLYIHNDTMSALGRPQDMFSDTAIQLQPVFAQWIQKTHALAPGVTAPGETASTSLTWGGGELVAVGGKVALLPIPLGTADFLVHHIHAFTIHVTVLILLKGVLFARSSRLIPDKASLGFRFPCDGPGRGGTCQVSAWDHVFLGLFWMYNAISVVIFHFSWKMQSDVWGSISDQGVVTHITGGNFAQSSITINGWLRDFLWAQASQVIQSYGSSLSAYGLFFLGAHFVWAFSLMFLFSGRGYWQELIESIVWAHNKLKVAPATQPRALSIVQGRAVGVTHYLLGGIATTWAFFLARIIAVG</sequence>